<name>Y1526_METAR</name>
<accession>Q0W4J4</accession>
<evidence type="ECO:0000255" key="1">
    <source>
        <dbReference type="HAMAP-Rule" id="MF_00584"/>
    </source>
</evidence>
<gene>
    <name type="ordered locus">UNCMA_15260</name>
    <name type="ORF">RCIX1430</name>
</gene>
<feature type="chain" id="PRO_1000082413" description="Putative HTH-type transcriptional regulatory protein UNCMA_15260">
    <location>
        <begin position="1"/>
        <end position="324"/>
    </location>
</feature>
<feature type="domain" description="HTH cro/C1-type" evidence="1">
    <location>
        <begin position="132"/>
        <end position="189"/>
    </location>
</feature>
<feature type="DNA-binding region" description="H-T-H motif" evidence="1">
    <location>
        <begin position="143"/>
        <end position="162"/>
    </location>
</feature>
<proteinExistence type="inferred from homology"/>
<organism>
    <name type="scientific">Methanocella arvoryzae (strain DSM 22066 / NBRC 105507 / MRE50)</name>
    <dbReference type="NCBI Taxonomy" id="351160"/>
    <lineage>
        <taxon>Archaea</taxon>
        <taxon>Methanobacteriati</taxon>
        <taxon>Methanobacteriota</taxon>
        <taxon>Stenosarchaea group</taxon>
        <taxon>Methanomicrobia</taxon>
        <taxon>Methanocellales</taxon>
        <taxon>Methanocellaceae</taxon>
        <taxon>Methanocella</taxon>
    </lineage>
</organism>
<dbReference type="EMBL" id="AM114193">
    <property type="protein sequence ID" value="CAJ36699.1"/>
    <property type="molecule type" value="Genomic_DNA"/>
</dbReference>
<dbReference type="RefSeq" id="WP_012035852.1">
    <property type="nucleotide sequence ID" value="NC_009464.1"/>
</dbReference>
<dbReference type="SMR" id="Q0W4J4"/>
<dbReference type="STRING" id="351160.RCIX1430"/>
<dbReference type="GeneID" id="5145103"/>
<dbReference type="KEGG" id="rci:RCIX1430"/>
<dbReference type="eggNOG" id="arCOG04152">
    <property type="taxonomic scope" value="Archaea"/>
</dbReference>
<dbReference type="OrthoDB" id="31424at2157"/>
<dbReference type="Proteomes" id="UP000000663">
    <property type="component" value="Chromosome"/>
</dbReference>
<dbReference type="GO" id="GO:0003677">
    <property type="term" value="F:DNA binding"/>
    <property type="evidence" value="ECO:0007669"/>
    <property type="project" value="UniProtKB-KW"/>
</dbReference>
<dbReference type="GO" id="GO:0003700">
    <property type="term" value="F:DNA-binding transcription factor activity"/>
    <property type="evidence" value="ECO:0007669"/>
    <property type="project" value="UniProtKB-UniRule"/>
</dbReference>
<dbReference type="CDD" id="cd00093">
    <property type="entry name" value="HTH_XRE"/>
    <property type="match status" value="1"/>
</dbReference>
<dbReference type="Gene3D" id="1.10.260.40">
    <property type="entry name" value="lambda repressor-like DNA-binding domains"/>
    <property type="match status" value="1"/>
</dbReference>
<dbReference type="HAMAP" id="MF_00584">
    <property type="entry name" value="HTH_type_cro_C1"/>
    <property type="match status" value="1"/>
</dbReference>
<dbReference type="InterPro" id="IPR020886">
    <property type="entry name" value="Arc_TR_HTH"/>
</dbReference>
<dbReference type="InterPro" id="IPR001387">
    <property type="entry name" value="Cro/C1-type_HTH"/>
</dbReference>
<dbReference type="InterPro" id="IPR010982">
    <property type="entry name" value="Lambda_DNA-bd_dom_sf"/>
</dbReference>
<dbReference type="NCBIfam" id="NF003162">
    <property type="entry name" value="PRK04140.1"/>
    <property type="match status" value="1"/>
</dbReference>
<dbReference type="Pfam" id="PF01381">
    <property type="entry name" value="HTH_3"/>
    <property type="match status" value="1"/>
</dbReference>
<dbReference type="SMART" id="SM00530">
    <property type="entry name" value="HTH_XRE"/>
    <property type="match status" value="1"/>
</dbReference>
<dbReference type="SUPFAM" id="SSF47413">
    <property type="entry name" value="lambda repressor-like DNA-binding domains"/>
    <property type="match status" value="1"/>
</dbReference>
<dbReference type="PROSITE" id="PS50943">
    <property type="entry name" value="HTH_CROC1"/>
    <property type="match status" value="1"/>
</dbReference>
<protein>
    <recommendedName>
        <fullName evidence="1">Putative HTH-type transcriptional regulatory protein UNCMA_15260</fullName>
    </recommendedName>
</protein>
<sequence>MTRETLLDRVIALLWKAEFTLSEKCDIRPRSFDVAARRGKTLLLVKVLSNIEGMSEETSQEMRRLSVLFNGSPIVIGEHTNDHPLEIGAVYLRYGIPCVNIETLHDFFIEEVPPLVYAAPGGLYVEIDGETLRSLREAKNISLGELAMALGVSRRTISKYESGMNATIEAALKLEEILDAPIACPVNMIVMFERTAKDADPSPNDLRNASALEKEALGTLMHIGFEVFHTTKAPFNALSQDDAAKMITGVSDYNEAMLKKAKFMSSLADVAGTYSLFIVKGPHRPKAVGNTLLIKSEELKQFDDRSDLFDLLLSREVKKANAGK</sequence>
<keyword id="KW-0238">DNA-binding</keyword>
<keyword id="KW-1185">Reference proteome</keyword>
<keyword id="KW-0804">Transcription</keyword>
<keyword id="KW-0805">Transcription regulation</keyword>
<reference key="1">
    <citation type="journal article" date="2006" name="Science">
        <title>Genome of rice cluster I archaea -- the key methane producers in the rice rhizosphere.</title>
        <authorList>
            <person name="Erkel C."/>
            <person name="Kube M."/>
            <person name="Reinhardt R."/>
            <person name="Liesack W."/>
        </authorList>
    </citation>
    <scope>NUCLEOTIDE SEQUENCE [LARGE SCALE GENOMIC DNA]</scope>
    <source>
        <strain>DSM 22066 / NBRC 105507 / MRE50</strain>
    </source>
</reference>